<proteinExistence type="inferred from homology"/>
<gene>
    <name evidence="1" type="primary">pdxH</name>
    <name type="ordered locus">Cyan7425_1243</name>
</gene>
<feature type="chain" id="PRO_1000186301" description="Pyridoxine/pyridoxamine 5'-phosphate oxidase">
    <location>
        <begin position="1"/>
        <end position="213"/>
    </location>
</feature>
<feature type="binding site" evidence="1">
    <location>
        <begin position="9"/>
        <end position="12"/>
    </location>
    <ligand>
        <name>substrate</name>
    </ligand>
</feature>
<feature type="binding site" evidence="1">
    <location>
        <begin position="62"/>
        <end position="67"/>
    </location>
    <ligand>
        <name>FMN</name>
        <dbReference type="ChEBI" id="CHEBI:58210"/>
    </ligand>
</feature>
<feature type="binding site" evidence="1">
    <location>
        <position position="67"/>
    </location>
    <ligand>
        <name>substrate</name>
    </ligand>
</feature>
<feature type="binding site" evidence="1">
    <location>
        <begin position="77"/>
        <end position="78"/>
    </location>
    <ligand>
        <name>FMN</name>
        <dbReference type="ChEBI" id="CHEBI:58210"/>
    </ligand>
</feature>
<feature type="binding site" evidence="1">
    <location>
        <position position="83"/>
    </location>
    <ligand>
        <name>FMN</name>
        <dbReference type="ChEBI" id="CHEBI:58210"/>
    </ligand>
</feature>
<feature type="binding site" evidence="1">
    <location>
        <position position="84"/>
    </location>
    <ligand>
        <name>FMN</name>
        <dbReference type="ChEBI" id="CHEBI:58210"/>
    </ligand>
</feature>
<feature type="binding site" evidence="1">
    <location>
        <position position="106"/>
    </location>
    <ligand>
        <name>FMN</name>
        <dbReference type="ChEBI" id="CHEBI:58210"/>
    </ligand>
</feature>
<feature type="binding site" evidence="1">
    <location>
        <position position="124"/>
    </location>
    <ligand>
        <name>substrate</name>
    </ligand>
</feature>
<feature type="binding site" evidence="1">
    <location>
        <position position="128"/>
    </location>
    <ligand>
        <name>substrate</name>
    </ligand>
</feature>
<feature type="binding site" evidence="1">
    <location>
        <position position="132"/>
    </location>
    <ligand>
        <name>substrate</name>
    </ligand>
</feature>
<feature type="binding site" evidence="1">
    <location>
        <begin position="141"/>
        <end position="142"/>
    </location>
    <ligand>
        <name>FMN</name>
        <dbReference type="ChEBI" id="CHEBI:58210"/>
    </ligand>
</feature>
<feature type="binding site" evidence="1">
    <location>
        <position position="186"/>
    </location>
    <ligand>
        <name>FMN</name>
        <dbReference type="ChEBI" id="CHEBI:58210"/>
    </ligand>
</feature>
<feature type="binding site" evidence="1">
    <location>
        <begin position="192"/>
        <end position="194"/>
    </location>
    <ligand>
        <name>substrate</name>
    </ligand>
</feature>
<feature type="binding site" evidence="1">
    <location>
        <position position="196"/>
    </location>
    <ligand>
        <name>FMN</name>
        <dbReference type="ChEBI" id="CHEBI:58210"/>
    </ligand>
</feature>
<reference key="1">
    <citation type="journal article" date="2011" name="MBio">
        <title>Novel metabolic attributes of the genus Cyanothece, comprising a group of unicellular nitrogen-fixing Cyanobacteria.</title>
        <authorList>
            <person name="Bandyopadhyay A."/>
            <person name="Elvitigala T."/>
            <person name="Welsh E."/>
            <person name="Stockel J."/>
            <person name="Liberton M."/>
            <person name="Min H."/>
            <person name="Sherman L.A."/>
            <person name="Pakrasi H.B."/>
        </authorList>
    </citation>
    <scope>NUCLEOTIDE SEQUENCE [LARGE SCALE GENOMIC DNA]</scope>
    <source>
        <strain>PCC 7425 / ATCC 29141</strain>
    </source>
</reference>
<dbReference type="EC" id="1.4.3.5" evidence="1"/>
<dbReference type="EMBL" id="CP001344">
    <property type="protein sequence ID" value="ACL43622.1"/>
    <property type="molecule type" value="Genomic_DNA"/>
</dbReference>
<dbReference type="SMR" id="B8HMK7"/>
<dbReference type="STRING" id="395961.Cyan7425_1243"/>
<dbReference type="KEGG" id="cyn:Cyan7425_1243"/>
<dbReference type="eggNOG" id="COG0259">
    <property type="taxonomic scope" value="Bacteria"/>
</dbReference>
<dbReference type="HOGENOM" id="CLU_032263_2_2_3"/>
<dbReference type="OrthoDB" id="9780392at2"/>
<dbReference type="UniPathway" id="UPA01068">
    <property type="reaction ID" value="UER00304"/>
</dbReference>
<dbReference type="UniPathway" id="UPA01068">
    <property type="reaction ID" value="UER00305"/>
</dbReference>
<dbReference type="GO" id="GO:0010181">
    <property type="term" value="F:FMN binding"/>
    <property type="evidence" value="ECO:0007669"/>
    <property type="project" value="UniProtKB-UniRule"/>
</dbReference>
<dbReference type="GO" id="GO:0004733">
    <property type="term" value="F:pyridoxamine phosphate oxidase activity"/>
    <property type="evidence" value="ECO:0007669"/>
    <property type="project" value="UniProtKB-UniRule"/>
</dbReference>
<dbReference type="GO" id="GO:0008615">
    <property type="term" value="P:pyridoxine biosynthetic process"/>
    <property type="evidence" value="ECO:0007669"/>
    <property type="project" value="UniProtKB-KW"/>
</dbReference>
<dbReference type="FunFam" id="2.30.110.10:FF:000005">
    <property type="entry name" value="NAD(P)H-hydrate epimerase"/>
    <property type="match status" value="1"/>
</dbReference>
<dbReference type="Gene3D" id="2.30.110.10">
    <property type="entry name" value="Electron Transport, Fmn-binding Protein, Chain A"/>
    <property type="match status" value="1"/>
</dbReference>
<dbReference type="HAMAP" id="MF_01629">
    <property type="entry name" value="PdxH"/>
    <property type="match status" value="1"/>
</dbReference>
<dbReference type="InterPro" id="IPR000659">
    <property type="entry name" value="Pyridox_Oxase"/>
</dbReference>
<dbReference type="InterPro" id="IPR019740">
    <property type="entry name" value="Pyridox_Oxase_CS"/>
</dbReference>
<dbReference type="InterPro" id="IPR011576">
    <property type="entry name" value="Pyridox_Oxase_N"/>
</dbReference>
<dbReference type="InterPro" id="IPR019576">
    <property type="entry name" value="Pyridoxamine_oxidase_dimer_C"/>
</dbReference>
<dbReference type="InterPro" id="IPR012349">
    <property type="entry name" value="Split_barrel_FMN-bd"/>
</dbReference>
<dbReference type="NCBIfam" id="TIGR00558">
    <property type="entry name" value="pdxH"/>
    <property type="match status" value="1"/>
</dbReference>
<dbReference type="NCBIfam" id="NF004231">
    <property type="entry name" value="PRK05679.1"/>
    <property type="match status" value="1"/>
</dbReference>
<dbReference type="PANTHER" id="PTHR10851:SF0">
    <property type="entry name" value="PYRIDOXINE-5'-PHOSPHATE OXIDASE"/>
    <property type="match status" value="1"/>
</dbReference>
<dbReference type="PANTHER" id="PTHR10851">
    <property type="entry name" value="PYRIDOXINE-5-PHOSPHATE OXIDASE"/>
    <property type="match status" value="1"/>
</dbReference>
<dbReference type="Pfam" id="PF10590">
    <property type="entry name" value="PNP_phzG_C"/>
    <property type="match status" value="1"/>
</dbReference>
<dbReference type="Pfam" id="PF01243">
    <property type="entry name" value="PNPOx_N"/>
    <property type="match status" value="1"/>
</dbReference>
<dbReference type="PIRSF" id="PIRSF000190">
    <property type="entry name" value="Pyd_amn-ph_oxd"/>
    <property type="match status" value="1"/>
</dbReference>
<dbReference type="SUPFAM" id="SSF50475">
    <property type="entry name" value="FMN-binding split barrel"/>
    <property type="match status" value="1"/>
</dbReference>
<dbReference type="PROSITE" id="PS01064">
    <property type="entry name" value="PYRIDOX_OXIDASE"/>
    <property type="match status" value="1"/>
</dbReference>
<comment type="function">
    <text evidence="1">Catalyzes the oxidation of either pyridoxine 5'-phosphate (PNP) or pyridoxamine 5'-phosphate (PMP) into pyridoxal 5'-phosphate (PLP).</text>
</comment>
<comment type="catalytic activity">
    <reaction evidence="1">
        <text>pyridoxamine 5'-phosphate + O2 + H2O = pyridoxal 5'-phosphate + H2O2 + NH4(+)</text>
        <dbReference type="Rhea" id="RHEA:15817"/>
        <dbReference type="ChEBI" id="CHEBI:15377"/>
        <dbReference type="ChEBI" id="CHEBI:15379"/>
        <dbReference type="ChEBI" id="CHEBI:16240"/>
        <dbReference type="ChEBI" id="CHEBI:28938"/>
        <dbReference type="ChEBI" id="CHEBI:58451"/>
        <dbReference type="ChEBI" id="CHEBI:597326"/>
        <dbReference type="EC" id="1.4.3.5"/>
    </reaction>
</comment>
<comment type="catalytic activity">
    <reaction evidence="1">
        <text>pyridoxine 5'-phosphate + O2 = pyridoxal 5'-phosphate + H2O2</text>
        <dbReference type="Rhea" id="RHEA:15149"/>
        <dbReference type="ChEBI" id="CHEBI:15379"/>
        <dbReference type="ChEBI" id="CHEBI:16240"/>
        <dbReference type="ChEBI" id="CHEBI:58589"/>
        <dbReference type="ChEBI" id="CHEBI:597326"/>
        <dbReference type="EC" id="1.4.3.5"/>
    </reaction>
</comment>
<comment type="cofactor">
    <cofactor evidence="1">
        <name>FMN</name>
        <dbReference type="ChEBI" id="CHEBI:58210"/>
    </cofactor>
    <text evidence="1">Binds 1 FMN per subunit.</text>
</comment>
<comment type="pathway">
    <text evidence="1">Cofactor metabolism; pyridoxal 5'-phosphate salvage; pyridoxal 5'-phosphate from pyridoxamine 5'-phosphate: step 1/1.</text>
</comment>
<comment type="pathway">
    <text evidence="1">Cofactor metabolism; pyridoxal 5'-phosphate salvage; pyridoxal 5'-phosphate from pyridoxine 5'-phosphate: step 1/1.</text>
</comment>
<comment type="subunit">
    <text evidence="1">Homodimer.</text>
</comment>
<comment type="similarity">
    <text evidence="1">Belongs to the pyridoxamine 5'-phosphate oxidase family.</text>
</comment>
<protein>
    <recommendedName>
        <fullName evidence="1">Pyridoxine/pyridoxamine 5'-phosphate oxidase</fullName>
        <ecNumber evidence="1">1.4.3.5</ecNumber>
    </recommendedName>
    <alternativeName>
        <fullName evidence="1">PNP/PMP oxidase</fullName>
        <shortName evidence="1">PNPOx</shortName>
    </alternativeName>
    <alternativeName>
        <fullName evidence="1">Pyridoxal 5'-phosphate synthase</fullName>
    </alternativeName>
</protein>
<keyword id="KW-0285">Flavoprotein</keyword>
<keyword id="KW-0288">FMN</keyword>
<keyword id="KW-0560">Oxidoreductase</keyword>
<keyword id="KW-0664">Pyridoxine biosynthesis</keyword>
<organism>
    <name type="scientific">Cyanothece sp. (strain PCC 7425 / ATCC 29141)</name>
    <dbReference type="NCBI Taxonomy" id="395961"/>
    <lineage>
        <taxon>Bacteria</taxon>
        <taxon>Bacillati</taxon>
        <taxon>Cyanobacteriota</taxon>
        <taxon>Cyanophyceae</taxon>
        <taxon>Gomontiellales</taxon>
        <taxon>Cyanothecaceae</taxon>
        <taxon>Cyanothece</taxon>
    </lineage>
</organism>
<accession>B8HMK7</accession>
<name>PDXH_CYAP4</name>
<evidence type="ECO:0000255" key="1">
    <source>
        <dbReference type="HAMAP-Rule" id="MF_01629"/>
    </source>
</evidence>
<sequence length="213" mass="24909">MTISISDLRKDYRQQSLSETEVDPNPLQQFQTWFKQAIEAEILEPNAMTLATLSREGKPAARIVLLKEVDDRGFTFFTNYKSRKGEELAHDPWAALVFWWAELERQVRIEGSVSQVSAADSDRYFSSRPWGSRLGAWASEQSKAITGREVLEQNLRALEQEYRDREVPRPPHWGGYRLSPTLIEFWQGRPNRLHDRLCYRLQGDQWQLERLSP</sequence>